<evidence type="ECO:0000255" key="1">
    <source>
        <dbReference type="HAMAP-Rule" id="MF_00240"/>
    </source>
</evidence>
<accession>Q2SJC1</accession>
<dbReference type="EMBL" id="CP000155">
    <property type="protein sequence ID" value="ABC29253.1"/>
    <property type="molecule type" value="Genomic_DNA"/>
</dbReference>
<dbReference type="RefSeq" id="WP_011396322.1">
    <property type="nucleotide sequence ID" value="NC_007645.1"/>
</dbReference>
<dbReference type="SMR" id="Q2SJC1"/>
<dbReference type="STRING" id="349521.HCH_02446"/>
<dbReference type="KEGG" id="hch:HCH_02446"/>
<dbReference type="eggNOG" id="COG2834">
    <property type="taxonomic scope" value="Bacteria"/>
</dbReference>
<dbReference type="HOGENOM" id="CLU_087560_0_0_6"/>
<dbReference type="OrthoDB" id="9787361at2"/>
<dbReference type="Proteomes" id="UP000000238">
    <property type="component" value="Chromosome"/>
</dbReference>
<dbReference type="GO" id="GO:0030288">
    <property type="term" value="C:outer membrane-bounded periplasmic space"/>
    <property type="evidence" value="ECO:0007669"/>
    <property type="project" value="TreeGrafter"/>
</dbReference>
<dbReference type="GO" id="GO:0044874">
    <property type="term" value="P:lipoprotein localization to outer membrane"/>
    <property type="evidence" value="ECO:0007669"/>
    <property type="project" value="UniProtKB-UniRule"/>
</dbReference>
<dbReference type="GO" id="GO:0042953">
    <property type="term" value="P:lipoprotein transport"/>
    <property type="evidence" value="ECO:0007669"/>
    <property type="project" value="InterPro"/>
</dbReference>
<dbReference type="CDD" id="cd16325">
    <property type="entry name" value="LolA"/>
    <property type="match status" value="1"/>
</dbReference>
<dbReference type="Gene3D" id="2.50.20.10">
    <property type="entry name" value="Lipoprotein localisation LolA/LolB/LppX"/>
    <property type="match status" value="1"/>
</dbReference>
<dbReference type="HAMAP" id="MF_00240">
    <property type="entry name" value="LolA"/>
    <property type="match status" value="1"/>
</dbReference>
<dbReference type="InterPro" id="IPR029046">
    <property type="entry name" value="LolA/LolB/LppX"/>
</dbReference>
<dbReference type="InterPro" id="IPR004564">
    <property type="entry name" value="OM_lipoprot_carrier_LolA-like"/>
</dbReference>
<dbReference type="InterPro" id="IPR018323">
    <property type="entry name" value="OM_lipoprot_carrier_LolA_Pbac"/>
</dbReference>
<dbReference type="NCBIfam" id="TIGR00547">
    <property type="entry name" value="lolA"/>
    <property type="match status" value="1"/>
</dbReference>
<dbReference type="PANTHER" id="PTHR35869">
    <property type="entry name" value="OUTER-MEMBRANE LIPOPROTEIN CARRIER PROTEIN"/>
    <property type="match status" value="1"/>
</dbReference>
<dbReference type="PANTHER" id="PTHR35869:SF1">
    <property type="entry name" value="OUTER-MEMBRANE LIPOPROTEIN CARRIER PROTEIN"/>
    <property type="match status" value="1"/>
</dbReference>
<dbReference type="Pfam" id="PF03548">
    <property type="entry name" value="LolA"/>
    <property type="match status" value="1"/>
</dbReference>
<dbReference type="SUPFAM" id="SSF89392">
    <property type="entry name" value="Prokaryotic lipoproteins and lipoprotein localization factors"/>
    <property type="match status" value="1"/>
</dbReference>
<organism>
    <name type="scientific">Hahella chejuensis (strain KCTC 2396)</name>
    <dbReference type="NCBI Taxonomy" id="349521"/>
    <lineage>
        <taxon>Bacteria</taxon>
        <taxon>Pseudomonadati</taxon>
        <taxon>Pseudomonadota</taxon>
        <taxon>Gammaproteobacteria</taxon>
        <taxon>Oceanospirillales</taxon>
        <taxon>Hahellaceae</taxon>
        <taxon>Hahella</taxon>
    </lineage>
</organism>
<keyword id="KW-0143">Chaperone</keyword>
<keyword id="KW-0574">Periplasm</keyword>
<keyword id="KW-0653">Protein transport</keyword>
<keyword id="KW-1185">Reference proteome</keyword>
<keyword id="KW-0732">Signal</keyword>
<keyword id="KW-0813">Transport</keyword>
<protein>
    <recommendedName>
        <fullName evidence="1">Outer-membrane lipoprotein carrier protein</fullName>
    </recommendedName>
</protein>
<gene>
    <name evidence="1" type="primary">lolA</name>
    <name type="ordered locus">HCH_02446</name>
</gene>
<feature type="signal peptide" evidence="1">
    <location>
        <begin position="1"/>
        <end position="21"/>
    </location>
</feature>
<feature type="chain" id="PRO_1000005693" description="Outer-membrane lipoprotein carrier protein">
    <location>
        <begin position="22"/>
        <end position="209"/>
    </location>
</feature>
<proteinExistence type="inferred from homology"/>
<name>LOLA_HAHCH</name>
<comment type="function">
    <text evidence="1">Participates in the translocation of lipoproteins from the inner membrane to the outer membrane. Only forms a complex with a lipoprotein if the residue after the N-terminal Cys is not an aspartate (The Asp acts as a targeting signal to indicate that the lipoprotein should stay in the inner membrane).</text>
</comment>
<comment type="subunit">
    <text evidence="1">Monomer.</text>
</comment>
<comment type="subcellular location">
    <subcellularLocation>
        <location evidence="1">Periplasm</location>
    </subcellularLocation>
</comment>
<comment type="similarity">
    <text evidence="1">Belongs to the LolA family.</text>
</comment>
<sequence>MKLLKLLSVAALSAASMMANAAGVDALSGLLKNVETFTANFTQTMRSQSGQVLQEVTGTLKAKRPGLFFWKTRAPLEQTIVTDGQQVWIYDPDLEQVTIQHLSQQLSNTPALLLSGEVGKIDEQYQVEQQPESQPGQVDFLLRPKGVDSLFDTLQLSFVNDQLVSMKLKDSLGQQTSLFFTAVSVNQTISEKAFHFEIPDGVDVIREAP</sequence>
<reference key="1">
    <citation type="journal article" date="2005" name="Nucleic Acids Res.">
        <title>Genomic blueprint of Hahella chejuensis, a marine microbe producing an algicidal agent.</title>
        <authorList>
            <person name="Jeong H."/>
            <person name="Yim J.H."/>
            <person name="Lee C."/>
            <person name="Choi S.-H."/>
            <person name="Park Y.K."/>
            <person name="Yoon S.H."/>
            <person name="Hur C.-G."/>
            <person name="Kang H.-Y."/>
            <person name="Kim D."/>
            <person name="Lee H.H."/>
            <person name="Park K.H."/>
            <person name="Park S.-H."/>
            <person name="Park H.-S."/>
            <person name="Lee H.K."/>
            <person name="Oh T.K."/>
            <person name="Kim J.F."/>
        </authorList>
    </citation>
    <scope>NUCLEOTIDE SEQUENCE [LARGE SCALE GENOMIC DNA]</scope>
    <source>
        <strain>KCTC 2396</strain>
    </source>
</reference>